<protein>
    <recommendedName>
        <fullName>V-type ATP synthase subunit E</fullName>
    </recommendedName>
    <alternativeName>
        <fullName>V-ATPase subunit E</fullName>
    </alternativeName>
</protein>
<dbReference type="EMBL" id="AE000520">
    <property type="protein sequence ID" value="AAC65411.1"/>
    <property type="molecule type" value="Genomic_DNA"/>
</dbReference>
<dbReference type="PIR" id="E71325">
    <property type="entry name" value="E71325"/>
</dbReference>
<dbReference type="RefSeq" id="WP_010881872.1">
    <property type="nucleotide sequence ID" value="NC_000919.1"/>
</dbReference>
<dbReference type="SMR" id="O83439"/>
<dbReference type="IntAct" id="O83439">
    <property type="interactions" value="2"/>
</dbReference>
<dbReference type="STRING" id="243276.TP_0424"/>
<dbReference type="EnsemblBacteria" id="AAC65411">
    <property type="protein sequence ID" value="AAC65411"/>
    <property type="gene ID" value="TP_0424"/>
</dbReference>
<dbReference type="KEGG" id="tpa:TP_0424"/>
<dbReference type="eggNOG" id="COG1390">
    <property type="taxonomic scope" value="Bacteria"/>
</dbReference>
<dbReference type="HOGENOM" id="CLU_1194461_0_0_12"/>
<dbReference type="Proteomes" id="UP000000811">
    <property type="component" value="Chromosome"/>
</dbReference>
<dbReference type="GO" id="GO:0006754">
    <property type="term" value="P:ATP biosynthetic process"/>
    <property type="evidence" value="ECO:0007669"/>
    <property type="project" value="UniProtKB-KW"/>
</dbReference>
<dbReference type="GO" id="GO:1902600">
    <property type="term" value="P:proton transmembrane transport"/>
    <property type="evidence" value="ECO:0007669"/>
    <property type="project" value="UniProtKB-KW"/>
</dbReference>
<dbReference type="Gene3D" id="1.20.5.2950">
    <property type="match status" value="1"/>
</dbReference>
<dbReference type="NCBIfam" id="NF002424">
    <property type="entry name" value="PRK01558.1"/>
    <property type="match status" value="1"/>
</dbReference>
<dbReference type="SUPFAM" id="SSF160527">
    <property type="entry name" value="V-type ATPase subunit E-like"/>
    <property type="match status" value="1"/>
</dbReference>
<comment type="function">
    <text evidence="1">Produces ATP from ADP in the presence of a proton gradient across the membrane.</text>
</comment>
<comment type="similarity">
    <text evidence="2">Belongs to the V-ATPase E subunit family.</text>
</comment>
<evidence type="ECO:0000250" key="1"/>
<evidence type="ECO:0000305" key="2"/>
<gene>
    <name type="primary">atpE</name>
    <name type="ordered locus">TP_0424</name>
</gene>
<feature type="chain" id="PRO_0000117335" description="V-type ATP synthase subunit E">
    <location>
        <begin position="1"/>
        <end position="232"/>
    </location>
</feature>
<proteinExistence type="inferred from homology"/>
<organism>
    <name type="scientific">Treponema pallidum (strain Nichols)</name>
    <dbReference type="NCBI Taxonomy" id="243276"/>
    <lineage>
        <taxon>Bacteria</taxon>
        <taxon>Pseudomonadati</taxon>
        <taxon>Spirochaetota</taxon>
        <taxon>Spirochaetia</taxon>
        <taxon>Spirochaetales</taxon>
        <taxon>Treponemataceae</taxon>
        <taxon>Treponema</taxon>
    </lineage>
</organism>
<reference key="1">
    <citation type="journal article" date="1998" name="Science">
        <title>Complete genome sequence of Treponema pallidum, the syphilis spirochete.</title>
        <authorList>
            <person name="Fraser C.M."/>
            <person name="Norris S.J."/>
            <person name="Weinstock G.M."/>
            <person name="White O."/>
            <person name="Sutton G.G."/>
            <person name="Dodson R.J."/>
            <person name="Gwinn M.L."/>
            <person name="Hickey E.K."/>
            <person name="Clayton R.A."/>
            <person name="Ketchum K.A."/>
            <person name="Sodergren E."/>
            <person name="Hardham J.M."/>
            <person name="McLeod M.P."/>
            <person name="Salzberg S.L."/>
            <person name="Peterson J.D."/>
            <person name="Khalak H.G."/>
            <person name="Richardson D.L."/>
            <person name="Howell J.K."/>
            <person name="Chidambaram M."/>
            <person name="Utterback T.R."/>
            <person name="McDonald L.A."/>
            <person name="Artiach P."/>
            <person name="Bowman C."/>
            <person name="Cotton M.D."/>
            <person name="Fujii C."/>
            <person name="Garland S.A."/>
            <person name="Hatch B."/>
            <person name="Horst K."/>
            <person name="Roberts K.M."/>
            <person name="Sandusky M."/>
            <person name="Weidman J.F."/>
            <person name="Smith H.O."/>
            <person name="Venter J.C."/>
        </authorList>
    </citation>
    <scope>NUCLEOTIDE SEQUENCE [LARGE SCALE GENOMIC DNA]</scope>
    <source>
        <strain>Nichols</strain>
    </source>
</reference>
<name>VATE_TREPA</name>
<keyword id="KW-0066">ATP synthesis</keyword>
<keyword id="KW-0375">Hydrogen ion transport</keyword>
<keyword id="KW-0406">Ion transport</keyword>
<keyword id="KW-1185">Reference proteome</keyword>
<keyword id="KW-0813">Transport</keyword>
<sequence length="232" mass="24977">MLGESREEAERIVRAAREEAERIVRAAREEAERIESSSLAALSQASRNVLLSFQDSVTRSLRAIISMETAQAYDAGVLRELIPRVVSAWVQAEGDKLELILSPADLRTLEGVFCAALQEQLSAGVELRSDDCLTAGFRIVPAEGGSYYDFSAAAVAQLFSSYVSARVAEVLSLLRRSCDVFLLLPYNAATISSMRRGASFALSGFFGLCATFLGSAGCCGAWKYLVVSRAGA</sequence>
<accession>O83439</accession>